<name>1A_CCMV</name>
<reference key="1">
    <citation type="journal article" date="1991" name="Virology">
        <title>The nucleotide sequence and genome organization of the RNA-1 segment in two bromoviruses: broad bean mottle virus and cowpea chlorotic mottle virus.</title>
        <authorList>
            <person name="Dzianott A.M."/>
            <person name="Bujarski J.J."/>
        </authorList>
    </citation>
    <scope>NUCLEOTIDE SEQUENCE [MRNA]</scope>
</reference>
<sequence length="958" mass="109139">MASSLDLLKLISERGADSRGASDIVEQQAVKQLLEQVDYSKRSKKINIRNKLTPDEENAFRARYGGAFDLNLTQQYNAPHSLAGALRIAEHYDCLSSFPPLDPIIDFGGSWWHHYSRKDTRIHSCCPVLGVRDAARHEERLCRMRKLLQECDDREDLPDFCIDRAESCSVQADWAICIHGGYDMGYTGLCEAMHSHGVRILRGTIMFDGAMLFDNEGVLPLLKCRWMKSGKGKSEVIKFDFMNESTLSYIHSWTNLGSFLTESVHVIGGTTYLLERELLKCNIMTYKIVATNLKCPKETLRHCVWFENISQYVAVNIPEDWNLTHWKPVRVAKTTVREVEEIAFRCFKENKEWTENMKAIASILSAKSSTVIINGQAIMAGERLNIDEYHLVAFALTMNLYQKYENIRNFYSEMEWKGWVNHFKTRFWWGGSTATSSTGKIREFLAGKFPWLRLDSYKDSFVFLSKISDVKEFENDSVPISRLRSFFSSEDLMERIELELESAQKRRREKKKKEVEKIDEEEFQDAIDIPNDAVRDDAKPEKEPKPEVTVGAEPTGPEEASRHFAIKEFSDYCRRLDCNAVSNLRRLWAIAGCDGRTARNKSILETYHRVDDMINLHYPGGQWLYPKKYDYEVGFNDSGLGPKFDDELYVVDKSCICANYQVLSKNTDSLKAPSCKISLCDGVAGCGKTTAIKSASNIAEHLVVTANKKSAEDVREALFPHNPSSEIAFKVIRTADSALMHGLPRCKRLLVDEAGLLHYGQLLAVAALCKCQSVLAFGDTEQISFKSRDATFRLKYGDLQFDSRDIVTETWRCPQDVISAVQTLKRGGNRTSKYLGWKSHSKVSRSISHKEIASPLQVTLSREKFYLTMTQADKAALVSRAKDFPELDKAWIEKHIKTVHEAQGVSVDHAVLVRLKSTKCDLFKTEEYCLVALTRHKITFEYLYVGMLSGDLIFRSIS</sequence>
<gene>
    <name type="ORF">ORF1a</name>
</gene>
<dbReference type="EC" id="3.6.4.-"/>
<dbReference type="EC" id="2.1.1.-"/>
<dbReference type="EMBL" id="M65139">
    <property type="protein sequence ID" value="AAA46369.1"/>
    <property type="molecule type" value="mRNA"/>
</dbReference>
<dbReference type="PIR" id="B41699">
    <property type="entry name" value="P1BVCC"/>
</dbReference>
<dbReference type="RefSeq" id="NP_613278.1">
    <property type="nucleotide sequence ID" value="NC_003543.1"/>
</dbReference>
<dbReference type="SMR" id="P27752"/>
<dbReference type="KEGG" id="vg:962153"/>
<dbReference type="OrthoDB" id="1460at10239"/>
<dbReference type="Proteomes" id="UP000008445">
    <property type="component" value="Genome"/>
</dbReference>
<dbReference type="GO" id="GO:0044167">
    <property type="term" value="C:host cell endoplasmic reticulum membrane"/>
    <property type="evidence" value="ECO:0007669"/>
    <property type="project" value="UniProtKB-SubCell"/>
</dbReference>
<dbReference type="GO" id="GO:0016020">
    <property type="term" value="C:membrane"/>
    <property type="evidence" value="ECO:0007669"/>
    <property type="project" value="UniProtKB-KW"/>
</dbReference>
<dbReference type="GO" id="GO:0005524">
    <property type="term" value="F:ATP binding"/>
    <property type="evidence" value="ECO:0007669"/>
    <property type="project" value="UniProtKB-KW"/>
</dbReference>
<dbReference type="GO" id="GO:0004386">
    <property type="term" value="F:helicase activity"/>
    <property type="evidence" value="ECO:0007669"/>
    <property type="project" value="UniProtKB-KW"/>
</dbReference>
<dbReference type="GO" id="GO:0016817">
    <property type="term" value="F:hydrolase activity, acting on acid anhydrides"/>
    <property type="evidence" value="ECO:0007669"/>
    <property type="project" value="InterPro"/>
</dbReference>
<dbReference type="GO" id="GO:0008174">
    <property type="term" value="F:mRNA methyltransferase activity"/>
    <property type="evidence" value="ECO:0007669"/>
    <property type="project" value="InterPro"/>
</dbReference>
<dbReference type="GO" id="GO:0003723">
    <property type="term" value="F:RNA binding"/>
    <property type="evidence" value="ECO:0007669"/>
    <property type="project" value="InterPro"/>
</dbReference>
<dbReference type="GO" id="GO:0032259">
    <property type="term" value="P:methylation"/>
    <property type="evidence" value="ECO:0007669"/>
    <property type="project" value="UniProtKB-KW"/>
</dbReference>
<dbReference type="GO" id="GO:0016556">
    <property type="term" value="P:mRNA modification"/>
    <property type="evidence" value="ECO:0007669"/>
    <property type="project" value="InterPro"/>
</dbReference>
<dbReference type="GO" id="GO:0006396">
    <property type="term" value="P:RNA processing"/>
    <property type="evidence" value="ECO:0007669"/>
    <property type="project" value="InterPro"/>
</dbReference>
<dbReference type="Gene3D" id="3.40.50.300">
    <property type="entry name" value="P-loop containing nucleotide triphosphate hydrolases"/>
    <property type="match status" value="2"/>
</dbReference>
<dbReference type="InterPro" id="IPR027351">
    <property type="entry name" value="(+)RNA_virus_helicase_core_dom"/>
</dbReference>
<dbReference type="InterPro" id="IPR002588">
    <property type="entry name" value="Alphavirus-like_MT_dom"/>
</dbReference>
<dbReference type="InterPro" id="IPR022184">
    <property type="entry name" value="CMV_1a_C"/>
</dbReference>
<dbReference type="InterPro" id="IPR027417">
    <property type="entry name" value="P-loop_NTPase"/>
</dbReference>
<dbReference type="Pfam" id="PF12503">
    <property type="entry name" value="CMV_1a_C"/>
    <property type="match status" value="1"/>
</dbReference>
<dbReference type="Pfam" id="PF01443">
    <property type="entry name" value="Viral_helicase1"/>
    <property type="match status" value="1"/>
</dbReference>
<dbReference type="Pfam" id="PF01660">
    <property type="entry name" value="Vmethyltransf"/>
    <property type="match status" value="1"/>
</dbReference>
<dbReference type="SUPFAM" id="SSF52540">
    <property type="entry name" value="P-loop containing nucleoside triphosphate hydrolases"/>
    <property type="match status" value="1"/>
</dbReference>
<dbReference type="PROSITE" id="PS51743">
    <property type="entry name" value="ALPHAVIRUS_MT"/>
    <property type="match status" value="1"/>
</dbReference>
<dbReference type="PROSITE" id="PS51657">
    <property type="entry name" value="PSRV_HELICASE"/>
    <property type="match status" value="1"/>
</dbReference>
<comment type="function">
    <text evidence="1">Involved in the virus replication. Contains a helicase domain and a methyltransferase domain. The methyltransferase domain is probably involved in viral RNA capping. Involved in the formation of ER membrane spherular invaginations in which RNA replication complexes form (By similarity).</text>
</comment>
<comment type="subunit">
    <text evidence="1">Interacts with RNA-directed RNA polymerase 2a.</text>
</comment>
<comment type="subcellular location">
    <subcellularLocation>
        <location evidence="1">Host endoplasmic reticulum membrane</location>
        <topology evidence="1">Peripheral membrane protein</topology>
    </subcellularLocation>
</comment>
<comment type="similarity">
    <text evidence="5">Belongs to the bromoviridae replication protein 1a family.</text>
</comment>
<evidence type="ECO:0000250" key="1"/>
<evidence type="ECO:0000255" key="2"/>
<evidence type="ECO:0000255" key="3">
    <source>
        <dbReference type="PROSITE-ProRule" id="PRU01079"/>
    </source>
</evidence>
<evidence type="ECO:0000256" key="4">
    <source>
        <dbReference type="SAM" id="MobiDB-lite"/>
    </source>
</evidence>
<evidence type="ECO:0000305" key="5"/>
<proteinExistence type="evidence at transcript level"/>
<protein>
    <recommendedName>
        <fullName>Replication protein 1a</fullName>
    </recommendedName>
    <domain>
        <recommendedName>
            <fullName>ATP-dependent helicase</fullName>
            <ecNumber>3.6.4.-</ecNumber>
        </recommendedName>
    </domain>
    <domain>
        <recommendedName>
            <fullName>Methyltransferase</fullName>
            <ecNumber>2.1.1.-</ecNumber>
        </recommendedName>
    </domain>
</protein>
<keyword id="KW-0067">ATP-binding</keyword>
<keyword id="KW-0347">Helicase</keyword>
<keyword id="KW-1038">Host endoplasmic reticulum</keyword>
<keyword id="KW-1043">Host membrane</keyword>
<keyword id="KW-0378">Hydrolase</keyword>
<keyword id="KW-0472">Membrane</keyword>
<keyword id="KW-0489">Methyltransferase</keyword>
<keyword id="KW-0547">Nucleotide-binding</keyword>
<keyword id="KW-0808">Transferase</keyword>
<accession>P27752</accession>
<feature type="chain" id="PRO_0000083257" description="Replication protein 1a">
    <location>
        <begin position="1"/>
        <end position="958"/>
    </location>
</feature>
<feature type="domain" description="Alphavirus-like MT" evidence="3">
    <location>
        <begin position="71"/>
        <end position="260"/>
    </location>
</feature>
<feature type="domain" description="(+)RNA virus helicase ATP-binding">
    <location>
        <begin position="652"/>
        <end position="807"/>
    </location>
</feature>
<feature type="domain" description="(+)RNA virus helicase C-terminal">
    <location>
        <begin position="808"/>
        <end position="958"/>
    </location>
</feature>
<feature type="region of interest" description="Methyltransferase">
    <location>
        <begin position="49"/>
        <end position="380"/>
    </location>
</feature>
<feature type="region of interest" description="Disordered" evidence="4">
    <location>
        <begin position="529"/>
        <end position="557"/>
    </location>
</feature>
<feature type="region of interest" description="ATP-dependent helicase">
    <location>
        <begin position="680"/>
        <end position="943"/>
    </location>
</feature>
<feature type="compositionally biased region" description="Basic and acidic residues" evidence="4">
    <location>
        <begin position="533"/>
        <end position="546"/>
    </location>
</feature>
<feature type="binding site" evidence="2">
    <location>
        <begin position="682"/>
        <end position="689"/>
    </location>
    <ligand>
        <name>ATP</name>
        <dbReference type="ChEBI" id="CHEBI:30616"/>
    </ligand>
</feature>
<organism>
    <name type="scientific">Cowpea chlorotic mottle virus</name>
    <name type="common">CCMV</name>
    <dbReference type="NCBI Taxonomy" id="12303"/>
    <lineage>
        <taxon>Viruses</taxon>
        <taxon>Riboviria</taxon>
        <taxon>Orthornavirae</taxon>
        <taxon>Kitrinoviricota</taxon>
        <taxon>Alsuviricetes</taxon>
        <taxon>Martellivirales</taxon>
        <taxon>Bromoviridae</taxon>
        <taxon>Bromovirus</taxon>
    </lineage>
</organism>
<organismHost>
    <name type="scientific">Glycine max</name>
    <name type="common">Soybean</name>
    <name type="synonym">Glycine hispida</name>
    <dbReference type="NCBI Taxonomy" id="3847"/>
</organismHost>
<organismHost>
    <name type="scientific">Vigna unguiculata</name>
    <name type="common">Cowpea</name>
    <dbReference type="NCBI Taxonomy" id="3917"/>
</organismHost>